<accession>P0DL78</accession>
<feature type="signal peptide" evidence="3">
    <location>
        <begin position="1"/>
        <end position="23"/>
    </location>
</feature>
<feature type="propeptide" id="PRO_0000442237" evidence="4">
    <location>
        <begin position="24"/>
        <end position="44"/>
    </location>
</feature>
<feature type="chain" id="PRO_0000442238" description="U1-theraphotoxin-Ct1b" evidence="4">
    <location>
        <begin position="45"/>
        <end position="82"/>
    </location>
</feature>
<proteinExistence type="evidence at protein level"/>
<dbReference type="SMR" id="P0DL78"/>
<dbReference type="GO" id="GO:0005576">
    <property type="term" value="C:extracellular region"/>
    <property type="evidence" value="ECO:0007669"/>
    <property type="project" value="UniProtKB-SubCell"/>
</dbReference>
<dbReference type="GO" id="GO:0005246">
    <property type="term" value="F:calcium channel regulator activity"/>
    <property type="evidence" value="ECO:0007669"/>
    <property type="project" value="UniProtKB-KW"/>
</dbReference>
<dbReference type="GO" id="GO:0090729">
    <property type="term" value="F:toxin activity"/>
    <property type="evidence" value="ECO:0007669"/>
    <property type="project" value="UniProtKB-KW"/>
</dbReference>
<dbReference type="InterPro" id="IPR012625">
    <property type="entry name" value="Hwtx-2-like"/>
</dbReference>
<dbReference type="Pfam" id="PF08089">
    <property type="entry name" value="Toxin_20"/>
    <property type="match status" value="1"/>
</dbReference>
<dbReference type="SUPFAM" id="SSF57059">
    <property type="entry name" value="omega toxin-like"/>
    <property type="match status" value="1"/>
</dbReference>
<dbReference type="PROSITE" id="PS60022">
    <property type="entry name" value="HWTX_2"/>
    <property type="match status" value="1"/>
</dbReference>
<keyword id="KW-0108">Calcium channel impairing toxin</keyword>
<keyword id="KW-0903">Direct protein sequencing</keyword>
<keyword id="KW-1015">Disulfide bond</keyword>
<keyword id="KW-0872">Ion channel impairing toxin</keyword>
<keyword id="KW-0528">Neurotoxin</keyword>
<keyword id="KW-0964">Secreted</keyword>
<keyword id="KW-0732">Signal</keyword>
<keyword id="KW-0800">Toxin</keyword>
<keyword id="KW-1218">Voltage-gated calcium channel impairing toxin</keyword>
<organism>
    <name type="scientific">Coremiocnemis tropix</name>
    <name type="common">Australian tarantula spider</name>
    <dbReference type="NCBI Taxonomy" id="1904443"/>
    <lineage>
        <taxon>Eukaryota</taxon>
        <taxon>Metazoa</taxon>
        <taxon>Ecdysozoa</taxon>
        <taxon>Arthropoda</taxon>
        <taxon>Chelicerata</taxon>
        <taxon>Arachnida</taxon>
        <taxon>Araneae</taxon>
        <taxon>Mygalomorphae</taxon>
        <taxon>Theraphosidae</taxon>
        <taxon>Coremiocnemis</taxon>
    </lineage>
</organism>
<comment type="function">
    <text evidence="1 2">This toxin causes paralysis and death to sheep blowflies. It does not target insect sodium channels.</text>
</comment>
<comment type="subcellular location">
    <subcellularLocation>
        <location evidence="4">Secreted</location>
    </subcellularLocation>
</comment>
<comment type="tissue specificity">
    <text evidence="7">Expressed by the venom gland.</text>
</comment>
<comment type="PTM">
    <text evidence="7">Contains 3 disulfide bonds. Two different connectivities are observed in similar proteins (C1-C3, C2-C5, C4-C6 or C1-C4, C2-C5, C3-C6).</text>
</comment>
<comment type="mass spectrometry">
    <text>Monoisotopic mass.</text>
</comment>
<comment type="miscellaneous">
    <text evidence="1">No effect of the synthetic peptide are observed on voltage-gated sodium channels from the American cockroach Periplanata americana or the German cockroach Blattella germanica.</text>
</comment>
<comment type="similarity">
    <text evidence="6">Belongs to the neurotoxin 12 (Hwtx-2) family. 03 (juruin) subfamily.</text>
</comment>
<name>CT1B_CORTR</name>
<evidence type="ECO:0000250" key="1">
    <source>
        <dbReference type="UniProtKB" id="P0DL77"/>
    </source>
</evidence>
<evidence type="ECO:0000250" key="2">
    <source>
        <dbReference type="UniProtKB" id="P0DL81"/>
    </source>
</evidence>
<evidence type="ECO:0000255" key="3"/>
<evidence type="ECO:0000269" key="4">
    <source>
    </source>
</evidence>
<evidence type="ECO:0000303" key="5">
    <source>
    </source>
</evidence>
<evidence type="ECO:0000305" key="6"/>
<evidence type="ECO:0000305" key="7">
    <source>
    </source>
</evidence>
<sequence>MRTFTLIAILTCALLVIYHAAEAEELEAKDVIESKALATLDEERFECSLSCDIKKNGKPCKGSGEKKCSGGWRCKMNFCLKF</sequence>
<reference key="1">
    <citation type="journal article" date="2016" name="Toxicon">
        <title>Isolation of two insecticidal toxins from venom of the Australian theraphosid spider Coremiocnemis tropix.</title>
        <authorList>
            <person name="Ikonomopoulou M.P."/>
            <person name="Smith J.J."/>
            <person name="Herzig V."/>
            <person name="Pineda S.S."/>
            <person name="Dziemborowicz S."/>
            <person name="Er S.Y."/>
            <person name="Durek T."/>
            <person name="Gilchrist J."/>
            <person name="Alewood P.F."/>
            <person name="Nicholson G.M."/>
            <person name="Bosmans F."/>
            <person name="King G.F."/>
        </authorList>
    </citation>
    <scope>NUCLEOTIDE SEQUENCE [MRNA]</scope>
    <scope>PROTEIN SEQUENCE OF 49-87</scope>
    <scope>MASS SPECTROMETRY</scope>
    <source>
        <tissue>Venom</tissue>
        <tissue>Venom gland</tissue>
    </source>
</reference>
<protein>
    <recommendedName>
        <fullName evidence="5">U1-theraphotoxin-Ct1b</fullName>
        <shortName evidence="5">U1-TRTX-Ct1b</shortName>
    </recommendedName>
</protein>